<accession>O39828</accession>
<gene>
    <name type="primary">DNA-R</name>
    <name type="synonym">C2</name>
</gene>
<name>MREP_FBNY2</name>
<evidence type="ECO:0000250" key="1"/>
<evidence type="ECO:0000255" key="2"/>
<evidence type="ECO:0000255" key="3">
    <source>
        <dbReference type="PROSITE-ProRule" id="PRU01364"/>
    </source>
</evidence>
<evidence type="ECO:0000305" key="4"/>
<evidence type="ECO:0000305" key="5">
    <source>
    </source>
</evidence>
<evidence type="ECO:0007829" key="6">
    <source>
        <dbReference type="PDB" id="2HWT"/>
    </source>
</evidence>
<evidence type="ECO:0007829" key="7">
    <source>
        <dbReference type="PDB" id="6H8O"/>
    </source>
</evidence>
<comment type="function">
    <text>Essential for the replication of all genomic viral ssDNA (trans-replication). The closed circular ssDNA genome is first converted to a superhelical dsDNA. Rep binds a specific hairpin at the genome origin of replication. Introduces an endonucleolytic nick within the conserved sequence 5'-A[GT]TATTAC-3' in the intergenic region of the genome, thereby initiating the rolling circle replication (RCR). Following cleavage, binds covalently to the 5'-phosphate of DNA as a tyrosyl ester. The cleavage gives rise to a free 3'-OH that serves as a primer for the cellular DNA polymerase. The polymerase synthesizes the (+) strand DNA by rolling circle mechanism. After one round of replication, a Rep-catalyzed nucleotidyl transfer reaction releases a circular single-stranded virus genome, thereby terminating the replication. Displays origin-specific DNA cleavage, nucleotidyl transferase, ATPase and helicase activities.</text>
</comment>
<comment type="catalytic activity">
    <reaction>
        <text>ATP + H2O = ADP + phosphate + H(+)</text>
        <dbReference type="Rhea" id="RHEA:13065"/>
        <dbReference type="ChEBI" id="CHEBI:15377"/>
        <dbReference type="ChEBI" id="CHEBI:15378"/>
        <dbReference type="ChEBI" id="CHEBI:30616"/>
        <dbReference type="ChEBI" id="CHEBI:43474"/>
        <dbReference type="ChEBI" id="CHEBI:456216"/>
    </reaction>
</comment>
<comment type="cofactor">
    <cofactor evidence="5">
        <name>Mg(2+)</name>
        <dbReference type="ChEBI" id="CHEBI:18420"/>
    </cofactor>
    <cofactor evidence="5">
        <name>Mn(2+)</name>
        <dbReference type="ChEBI" id="CHEBI:29035"/>
    </cofactor>
    <text evidence="5">Divalent metal cations, possibly Mg(2+) or Mn(2+).</text>
</comment>
<comment type="subunit">
    <text evidence="1 4">Homooligomer (Potential). Rep binds to repeated DNA motifs (iterons) (By similarity).</text>
</comment>
<comment type="subcellular location">
    <subcellularLocation>
        <location evidence="4">Host nucleus</location>
    </subcellularLocation>
</comment>
<comment type="domain">
    <text>There are 3 rolling circle replication (RCR) motifs. RCR-2 is probably involved in metal coordination. RCR-3 is required for phosphodiester bond cleavage for initiation of RCR.</text>
</comment>
<comment type="miscellaneous">
    <text>The genome of nanoviruses is composed of six to eight segments. In addition, some isolates contain subviral DNAs.</text>
</comment>
<comment type="similarity">
    <text evidence="4">Belongs to the nanoviridea/circoviridae replication-associated protein family.</text>
</comment>
<organismHost>
    <name type="scientific">Cicer arietinum</name>
    <name type="common">Chickpea</name>
    <name type="synonym">Garbanzo</name>
    <dbReference type="NCBI Taxonomy" id="3827"/>
</organismHost>
<organismHost>
    <name type="scientific">Lens culinaris</name>
    <name type="common">Lentil</name>
    <name type="synonym">Cicer lens</name>
    <dbReference type="NCBI Taxonomy" id="3864"/>
</organismHost>
<organismHost>
    <name type="scientific">Phaseolus vulgaris</name>
    <name type="common">Kidney bean</name>
    <name type="synonym">French bean</name>
    <dbReference type="NCBI Taxonomy" id="3885"/>
</organismHost>
<organismHost>
    <name type="scientific">Vicia faba</name>
    <name type="common">Broad bean</name>
    <name type="synonym">Faba vulgaris</name>
    <dbReference type="NCBI Taxonomy" id="3906"/>
</organismHost>
<feature type="chain" id="PRO_0000318772" description="Master replication protein">
    <location>
        <begin position="1"/>
        <end position="286"/>
    </location>
</feature>
<feature type="domain" description="CRESS-DNA virus Rep endonuclease" evidence="3">
    <location>
        <begin position="2"/>
        <end position="96"/>
    </location>
</feature>
<feature type="short sequence motif" description="RCR-1" evidence="3">
    <location>
        <begin position="9"/>
        <end position="12"/>
    </location>
</feature>
<feature type="short sequence motif" description="RCR-2" evidence="3">
    <location>
        <begin position="41"/>
        <end position="43"/>
    </location>
</feature>
<feature type="short sequence motif" description="Nuclear localization signal" evidence="2">
    <location>
        <begin position="50"/>
        <end position="70"/>
    </location>
</feature>
<feature type="short sequence motif" description="RCR-3" evidence="3">
    <location>
        <begin position="79"/>
        <end position="82"/>
    </location>
</feature>
<feature type="short sequence motif" description="Nuclear localization signal" evidence="2">
    <location>
        <begin position="96"/>
        <end position="102"/>
    </location>
</feature>
<feature type="active site" description="For DNA cleavage activity" evidence="3">
    <location>
        <position position="79"/>
    </location>
</feature>
<feature type="binding site" evidence="2">
    <location>
        <position position="33"/>
    </location>
    <ligand>
        <name>a divalent metal cation</name>
        <dbReference type="ChEBI" id="CHEBI:60240"/>
    </ligand>
</feature>
<feature type="binding site" evidence="2">
    <location>
        <position position="41"/>
    </location>
    <ligand>
        <name>a divalent metal cation</name>
        <dbReference type="ChEBI" id="CHEBI:60240"/>
    </ligand>
</feature>
<feature type="binding site" evidence="2">
    <location>
        <position position="84"/>
    </location>
    <ligand>
        <name>a divalent metal cation</name>
        <dbReference type="ChEBI" id="CHEBI:60240"/>
    </ligand>
</feature>
<feature type="binding site" evidence="1">
    <location>
        <begin position="186"/>
        <end position="188"/>
    </location>
    <ligand>
        <name>ATP</name>
        <dbReference type="ChEBI" id="CHEBI:30616"/>
    </ligand>
</feature>
<feature type="strand" evidence="7">
    <location>
        <begin position="4"/>
        <end position="14"/>
    </location>
</feature>
<feature type="strand" evidence="7">
    <location>
        <begin position="25"/>
        <end position="34"/>
    </location>
</feature>
<feature type="strand" evidence="7">
    <location>
        <begin position="40"/>
        <end position="52"/>
    </location>
</feature>
<feature type="helix" evidence="7">
    <location>
        <begin position="54"/>
        <end position="60"/>
    </location>
</feature>
<feature type="strand" evidence="7">
    <location>
        <begin position="64"/>
        <end position="68"/>
    </location>
</feature>
<feature type="helix" evidence="7">
    <location>
        <begin position="73"/>
        <end position="79"/>
    </location>
</feature>
<feature type="helix" evidence="6">
    <location>
        <begin position="83"/>
        <end position="85"/>
    </location>
</feature>
<feature type="strand" evidence="7">
    <location>
        <begin position="86"/>
        <end position="94"/>
    </location>
</feature>
<dbReference type="EC" id="2.7.7.-"/>
<dbReference type="EC" id="3.1.21.-"/>
<dbReference type="EC" id="3.6.1.-"/>
<dbReference type="EMBL" id="Y11405">
    <property type="protein sequence ID" value="CAA72209.1"/>
    <property type="molecule type" value="Genomic_DNA"/>
</dbReference>
<dbReference type="PDB" id="2HWT">
    <property type="method" value="NMR"/>
    <property type="chains" value="A=2-95"/>
</dbReference>
<dbReference type="PDB" id="6H8O">
    <property type="method" value="X-ray"/>
    <property type="resolution" value="1.15 A"/>
    <property type="chains" value="A/B=2-96"/>
</dbReference>
<dbReference type="PDBsum" id="2HWT"/>
<dbReference type="PDBsum" id="6H8O"/>
<dbReference type="BMRB" id="O39828"/>
<dbReference type="SMR" id="O39828"/>
<dbReference type="EvolutionaryTrace" id="O39828"/>
<dbReference type="Proteomes" id="UP001515460">
    <property type="component" value="Genome"/>
</dbReference>
<dbReference type="GO" id="GO:0042025">
    <property type="term" value="C:host cell nucleus"/>
    <property type="evidence" value="ECO:0007669"/>
    <property type="project" value="UniProtKB-SubCell"/>
</dbReference>
<dbReference type="GO" id="GO:0005524">
    <property type="term" value="F:ATP binding"/>
    <property type="evidence" value="ECO:0007669"/>
    <property type="project" value="UniProtKB-KW"/>
</dbReference>
<dbReference type="GO" id="GO:0016887">
    <property type="term" value="F:ATP hydrolysis activity"/>
    <property type="evidence" value="ECO:0007669"/>
    <property type="project" value="RHEA"/>
</dbReference>
<dbReference type="GO" id="GO:0003677">
    <property type="term" value="F:DNA binding"/>
    <property type="evidence" value="ECO:0007669"/>
    <property type="project" value="UniProtKB-KW"/>
</dbReference>
<dbReference type="GO" id="GO:0004519">
    <property type="term" value="F:endonuclease activity"/>
    <property type="evidence" value="ECO:0007669"/>
    <property type="project" value="UniProtKB-KW"/>
</dbReference>
<dbReference type="GO" id="GO:0046872">
    <property type="term" value="F:metal ion binding"/>
    <property type="evidence" value="ECO:0007669"/>
    <property type="project" value="UniProtKB-KW"/>
</dbReference>
<dbReference type="GO" id="GO:0016779">
    <property type="term" value="F:nucleotidyltransferase activity"/>
    <property type="evidence" value="ECO:0000314"/>
    <property type="project" value="CACAO"/>
</dbReference>
<dbReference type="GO" id="GO:0003723">
    <property type="term" value="F:RNA binding"/>
    <property type="evidence" value="ECO:0007669"/>
    <property type="project" value="InterPro"/>
</dbReference>
<dbReference type="GO" id="GO:0003724">
    <property type="term" value="F:RNA helicase activity"/>
    <property type="evidence" value="ECO:0007669"/>
    <property type="project" value="InterPro"/>
</dbReference>
<dbReference type="GO" id="GO:0006260">
    <property type="term" value="P:DNA replication"/>
    <property type="evidence" value="ECO:0007669"/>
    <property type="project" value="UniProtKB-KW"/>
</dbReference>
<dbReference type="FunFam" id="3.40.1310.20:FF:000002">
    <property type="entry name" value="Master replication protein"/>
    <property type="match status" value="1"/>
</dbReference>
<dbReference type="Gene3D" id="3.40.1310.20">
    <property type="match status" value="1"/>
</dbReference>
<dbReference type="InterPro" id="IPR049912">
    <property type="entry name" value="CRESS_DNA_REP"/>
</dbReference>
<dbReference type="InterPro" id="IPR000605">
    <property type="entry name" value="Helicase_SF3_ssDNA/RNA_vir"/>
</dbReference>
<dbReference type="Pfam" id="PF00910">
    <property type="entry name" value="RNA_helicase"/>
    <property type="match status" value="1"/>
</dbReference>
<dbReference type="Pfam" id="PF02407">
    <property type="entry name" value="Viral_Rep"/>
    <property type="match status" value="1"/>
</dbReference>
<dbReference type="PROSITE" id="PS52020">
    <property type="entry name" value="CRESS_DNA_REP"/>
    <property type="match status" value="1"/>
</dbReference>
<organism>
    <name type="scientific">Faba bean necrotic yellows virus (isolate Syrian SV292-88)</name>
    <name type="common">FBNYV</name>
    <dbReference type="NCBI Taxonomy" id="291604"/>
    <lineage>
        <taxon>Viruses</taxon>
        <taxon>Monodnaviria</taxon>
        <taxon>Shotokuvirae</taxon>
        <taxon>Cressdnaviricota</taxon>
        <taxon>Arfiviricetes</taxon>
        <taxon>Mulpavirales</taxon>
        <taxon>Nanoviridae</taxon>
        <taxon>Nanovirus</taxon>
        <taxon>Faba bean necrotic yellows virus</taxon>
    </lineage>
</organism>
<proteinExistence type="evidence at protein level"/>
<sequence>MARQVICWCFTLNNPLSPLSLHDSMKYLVYQTEQGEAGNIHFQGYIEMKKRTSLAGMKKLIPGAHFEKRRGTQGEARAYSMKEDTRLEGPWEYGEFVPTIEDKLREVMNDMKITGKRPIEYIEECCNTYDKSASTLREFRGELKKKKAISSWELQRKPWMGEVDALLQERDGRRIIWVYGPQGGEGKTSYAKHLVKTRDAFYSTGGKTADIAFAWDHQELVLFDFPRSFEEYVNYGVIEQLKNGIIQSGKYQSVIKYSDYVEVIVFANFTPRSGMFSEDRIVYVYA</sequence>
<keyword id="KW-0002">3D-structure</keyword>
<keyword id="KW-0067">ATP-binding</keyword>
<keyword id="KW-0190">Covalent protein-DNA linkage</keyword>
<keyword id="KW-0235">DNA replication</keyword>
<keyword id="KW-0238">DNA-binding</keyword>
<keyword id="KW-0255">Endonuclease</keyword>
<keyword id="KW-0347">Helicase</keyword>
<keyword id="KW-1048">Host nucleus</keyword>
<keyword id="KW-0378">Hydrolase</keyword>
<keyword id="KW-0479">Metal-binding</keyword>
<keyword id="KW-0511">Multifunctional enzyme</keyword>
<keyword id="KW-0540">Nuclease</keyword>
<keyword id="KW-0547">Nucleotide-binding</keyword>
<keyword id="KW-0548">Nucleotidyltransferase</keyword>
<keyword id="KW-1185">Reference proteome</keyword>
<keyword id="KW-0808">Transferase</keyword>
<protein>
    <recommendedName>
        <fullName>Master replication protein</fullName>
        <shortName>M-Rep</shortName>
        <ecNumber>2.7.7.-</ecNumber>
        <ecNumber>3.1.21.-</ecNumber>
        <ecNumber>3.6.1.-</ecNumber>
    </recommendedName>
    <alternativeName>
        <fullName>ATP-dependent helicase C2</fullName>
    </alternativeName>
    <alternativeName>
        <fullName>Replication-associated protein 2</fullName>
        <shortName>Rep2</shortName>
    </alternativeName>
</protein>
<reference key="1">
    <citation type="journal article" date="1997" name="Virology">
        <title>Analysis of six DNA components of the faba bean necrotic yellows virus genome and their structural affinity to related plant virus genomes.</title>
        <authorList>
            <person name="Katul L."/>
            <person name="Maiss E."/>
            <person name="Morozov S.Y."/>
            <person name="Vetten H.J."/>
        </authorList>
    </citation>
    <scope>NUCLEOTIDE SEQUENCE [GENOMIC DNA]</scope>
</reference>
<reference key="2">
    <citation type="journal article" date="2007" name="Biochemistry">
        <title>Solution structure of the endonuclease domain from the master replication initiator protein of the nanovirus faba bean necrotic yellows virus and comparison with the corresponding geminivirus and circovirus structures.</title>
        <authorList>
            <person name="Vega-Rocha S."/>
            <person name="Gronenborn B."/>
            <person name="Gronenborn A.M."/>
            <person name="Campos-Olivas R."/>
        </authorList>
    </citation>
    <scope>STRUCTURE BY NMR OF 2-95</scope>
    <scope>COFACTOR</scope>
    <scope>CHARACTERIZATION</scope>
</reference>